<gene>
    <name type="ordered locus">MIMI_L719</name>
</gene>
<protein>
    <recommendedName>
        <fullName>Uncharacterized protein L719</fullName>
    </recommendedName>
</protein>
<reference key="1">
    <citation type="journal article" date="2004" name="Science">
        <title>The 1.2-megabase genome sequence of Mimivirus.</title>
        <authorList>
            <person name="Raoult D."/>
            <person name="Audic S."/>
            <person name="Robert C."/>
            <person name="Abergel C."/>
            <person name="Renesto P."/>
            <person name="Ogata H."/>
            <person name="La Scola B."/>
            <person name="Susan M."/>
            <person name="Claverie J.-M."/>
        </authorList>
    </citation>
    <scope>NUCLEOTIDE SEQUENCE [LARGE SCALE GENOMIC DNA]</scope>
    <source>
        <strain>Rowbotham-Bradford</strain>
    </source>
</reference>
<dbReference type="EMBL" id="AY653733">
    <property type="protein sequence ID" value="AAV50979.1"/>
    <property type="molecule type" value="Genomic_DNA"/>
</dbReference>
<dbReference type="KEGG" id="vg:9925373"/>
<dbReference type="OrthoDB" id="33447at10239"/>
<dbReference type="Proteomes" id="UP000001134">
    <property type="component" value="Genome"/>
</dbReference>
<dbReference type="Gene3D" id="3.50.4.10">
    <property type="entry name" value="Hepatocyte Growth Factor"/>
    <property type="match status" value="2"/>
</dbReference>
<dbReference type="InterPro" id="IPR003609">
    <property type="entry name" value="Pan_app"/>
</dbReference>
<dbReference type="Pfam" id="PF14295">
    <property type="entry name" value="PAN_4"/>
    <property type="match status" value="2"/>
</dbReference>
<feature type="chain" id="PRO_0000253291" description="Uncharacterized protein L719">
    <location>
        <begin position="1"/>
        <end position="343"/>
    </location>
</feature>
<keyword id="KW-1185">Reference proteome</keyword>
<sequence length="343" mass="37719">MMYNSGNNSRDKLKLLDHLNQMIASHRNSQSSGTNQVYVDDKPITANRFNNAINISGAVITNREPYYASGVPTTVHRTESVFSPQSTNVVPFNGVPIIRGSTVMNNMDCIGSNYNDFKVNGMGSCRNACIADNKCLTWSFDKRNQHCYLKDSASVSCNSNDAYTSGRIQSTFQPTHNVTPVPIHSSSIPTSMPIQLAPRPPTQSVPVQTIPIQTQIPQPPRNPVQPPMSPVQPPISPVQPPISPVQPPISPVPSTPSIKRISTMIPNYIHQEVLGPNRSLNVDSSNACQTACINDDRCASWNFLPQMQDNKNFDRCLLYYGQPTLIGPARGGSHGKIYNQLPY</sequence>
<name>YL719_MIMIV</name>
<organism>
    <name type="scientific">Acanthamoeba polyphaga mimivirus</name>
    <name type="common">APMV</name>
    <dbReference type="NCBI Taxonomy" id="212035"/>
    <lineage>
        <taxon>Viruses</taxon>
        <taxon>Varidnaviria</taxon>
        <taxon>Bamfordvirae</taxon>
        <taxon>Nucleocytoviricota</taxon>
        <taxon>Megaviricetes</taxon>
        <taxon>Imitervirales</taxon>
        <taxon>Mimiviridae</taxon>
        <taxon>Megamimivirinae</taxon>
        <taxon>Mimivirus</taxon>
        <taxon>Mimivirus bradfordmassiliense</taxon>
    </lineage>
</organism>
<accession>Q5UNW8</accession>
<proteinExistence type="predicted"/>
<organismHost>
    <name type="scientific">Acanthamoeba polyphaga</name>
    <name type="common">Amoeba</name>
    <dbReference type="NCBI Taxonomy" id="5757"/>
</organismHost>